<protein>
    <recommendedName>
        <fullName>Gag polyprotein</fullName>
    </recommendedName>
    <alternativeName>
        <fullName>Core polyprotein</fullName>
    </alternativeName>
    <component>
        <recommendedName>
            <fullName>Matrix protein p15</fullName>
            <shortName>MA</shortName>
        </recommendedName>
    </component>
    <component>
        <recommendedName>
            <fullName>RNA-binding phosphoprotein p12</fullName>
        </recommendedName>
        <alternativeName>
            <fullName>pp12</fullName>
        </alternativeName>
    </component>
    <component>
        <recommendedName>
            <fullName>Capsid protein p30</fullName>
            <shortName>CA</shortName>
        </recommendedName>
    </component>
</protein>
<organism>
    <name type="scientific">Feline sarcoma virus (strain Snyder-Theilen)</name>
    <dbReference type="NCBI Taxonomy" id="11780"/>
    <lineage>
        <taxon>Viruses</taxon>
        <taxon>Riboviria</taxon>
        <taxon>Pararnavirae</taxon>
        <taxon>Artverviricota</taxon>
        <taxon>Revtraviricetes</taxon>
        <taxon>Ortervirales</taxon>
        <taxon>Retroviridae</taxon>
        <taxon>Orthoretrovirinae</taxon>
        <taxon>Gammaretrovirus</taxon>
    </lineage>
</organism>
<organismHost>
    <name type="scientific">Felidae</name>
    <name type="common">cat family</name>
    <dbReference type="NCBI Taxonomy" id="9681"/>
</organismHost>
<feature type="initiator methionine" description="Removed; by host" evidence="3">
    <location>
        <position position="1"/>
    </location>
</feature>
<feature type="chain" id="PRO_0000390803" description="Gag polyprotein">
    <location>
        <begin position="2"/>
        <end position="297"/>
    </location>
</feature>
<feature type="chain" id="PRO_0000040857" description="Matrix protein p15" evidence="4">
    <location>
        <begin position="2"/>
        <end position="127"/>
    </location>
</feature>
<feature type="chain" id="PRO_0000040858" description="RNA-binding phosphoprotein p12" evidence="4">
    <location>
        <begin position="128"/>
        <end position="197"/>
    </location>
</feature>
<feature type="chain" id="PRO_0000040859" description="Capsid protein p30" evidence="4">
    <location>
        <begin position="198"/>
        <end position="297"/>
    </location>
</feature>
<feature type="region of interest" description="Disordered" evidence="5">
    <location>
        <begin position="97"/>
        <end position="207"/>
    </location>
</feature>
<feature type="region of interest" description="Disordered" evidence="5">
    <location>
        <begin position="276"/>
        <end position="297"/>
    </location>
</feature>
<feature type="short sequence motif" description="PTAP/PSAP motif">
    <location>
        <begin position="118"/>
        <end position="121"/>
    </location>
</feature>
<feature type="short sequence motif" description="LYPX(n)L motif">
    <location>
        <begin position="126"/>
        <end position="130"/>
    </location>
</feature>
<feature type="short sequence motif" description="PPXY motif">
    <location>
        <begin position="157"/>
        <end position="160"/>
    </location>
</feature>
<feature type="compositionally biased region" description="Pro residues" evidence="5">
    <location>
        <begin position="100"/>
        <end position="119"/>
    </location>
</feature>
<feature type="compositionally biased region" description="Low complexity" evidence="5">
    <location>
        <begin position="120"/>
        <end position="129"/>
    </location>
</feature>
<feature type="compositionally biased region" description="Pro residues" evidence="5">
    <location>
        <begin position="130"/>
        <end position="146"/>
    </location>
</feature>
<feature type="compositionally biased region" description="Pro residues" evidence="5">
    <location>
        <begin position="156"/>
        <end position="171"/>
    </location>
</feature>
<feature type="site" description="Cleavage; by viral protease" evidence="1">
    <location>
        <begin position="127"/>
        <end position="128"/>
    </location>
</feature>
<feature type="site" description="Cleavage; by viral protease" evidence="1">
    <location>
        <begin position="197"/>
        <end position="198"/>
    </location>
</feature>
<feature type="lipid moiety-binding region" description="N-myristoyl glycine; by host" evidence="1">
    <location>
        <position position="2"/>
    </location>
</feature>
<accession>P03338</accession>
<dbReference type="EMBL" id="J02088">
    <property type="protein sequence ID" value="AAA43046.2"/>
    <property type="status" value="ALT_SEQ"/>
    <property type="molecule type" value="Genomic_RNA"/>
</dbReference>
<dbReference type="PIR" id="A03935">
    <property type="entry name" value="FOMVCS"/>
</dbReference>
<dbReference type="SMR" id="P03338"/>
<dbReference type="GO" id="GO:0020002">
    <property type="term" value="C:host cell plasma membrane"/>
    <property type="evidence" value="ECO:0007669"/>
    <property type="project" value="UniProtKB-SubCell"/>
</dbReference>
<dbReference type="GO" id="GO:0016020">
    <property type="term" value="C:membrane"/>
    <property type="evidence" value="ECO:0007669"/>
    <property type="project" value="UniProtKB-KW"/>
</dbReference>
<dbReference type="GO" id="GO:0019028">
    <property type="term" value="C:viral capsid"/>
    <property type="evidence" value="ECO:0007669"/>
    <property type="project" value="UniProtKB-KW"/>
</dbReference>
<dbReference type="GO" id="GO:0003723">
    <property type="term" value="F:RNA binding"/>
    <property type="evidence" value="ECO:0007669"/>
    <property type="project" value="UniProtKB-KW"/>
</dbReference>
<dbReference type="GO" id="GO:0039660">
    <property type="term" value="F:structural constituent of virion"/>
    <property type="evidence" value="ECO:0007669"/>
    <property type="project" value="UniProtKB-KW"/>
</dbReference>
<dbReference type="GO" id="GO:0039702">
    <property type="term" value="P:viral budding via host ESCRT complex"/>
    <property type="evidence" value="ECO:0007669"/>
    <property type="project" value="UniProtKB-KW"/>
</dbReference>
<dbReference type="Gene3D" id="1.10.150.180">
    <property type="entry name" value="Gamma-retroviral matrix domain"/>
    <property type="match status" value="1"/>
</dbReference>
<dbReference type="Gene3D" id="1.10.375.10">
    <property type="entry name" value="Human Immunodeficiency Virus Type 1 Capsid Protein"/>
    <property type="match status" value="1"/>
</dbReference>
<dbReference type="InterPro" id="IPR000840">
    <property type="entry name" value="G_retro_matrix"/>
</dbReference>
<dbReference type="InterPro" id="IPR036946">
    <property type="entry name" value="G_retro_matrix_sf"/>
</dbReference>
<dbReference type="InterPro" id="IPR002079">
    <property type="entry name" value="Gag_p12"/>
</dbReference>
<dbReference type="InterPro" id="IPR003036">
    <property type="entry name" value="Gag_P30"/>
</dbReference>
<dbReference type="InterPro" id="IPR008919">
    <property type="entry name" value="Retrov_capsid_N"/>
</dbReference>
<dbReference type="InterPro" id="IPR050462">
    <property type="entry name" value="Retroviral_Gag-Pol_poly"/>
</dbReference>
<dbReference type="InterPro" id="IPR010999">
    <property type="entry name" value="Retrovr_matrix"/>
</dbReference>
<dbReference type="PANTHER" id="PTHR33166">
    <property type="entry name" value="GAG_P30 DOMAIN-CONTAINING PROTEIN"/>
    <property type="match status" value="1"/>
</dbReference>
<dbReference type="Pfam" id="PF01140">
    <property type="entry name" value="Gag_MA"/>
    <property type="match status" value="1"/>
</dbReference>
<dbReference type="Pfam" id="PF01141">
    <property type="entry name" value="Gag_p12"/>
    <property type="match status" value="1"/>
</dbReference>
<dbReference type="Pfam" id="PF02093">
    <property type="entry name" value="Gag_p30"/>
    <property type="match status" value="1"/>
</dbReference>
<dbReference type="SUPFAM" id="SSF47836">
    <property type="entry name" value="Retroviral matrix proteins"/>
    <property type="match status" value="1"/>
</dbReference>
<dbReference type="SUPFAM" id="SSF47943">
    <property type="entry name" value="Retrovirus capsid protein, N-terminal core domain"/>
    <property type="match status" value="1"/>
</dbReference>
<gene>
    <name type="primary">gag</name>
</gene>
<reference key="1">
    <citation type="journal article" date="1982" name="Cell">
        <title>Nucleotide sequences of feline retroviral oncogenes (v-fes) provide evidence for a family of tyrosine-specific protein kinase genes.</title>
        <authorList>
            <person name="Hampe A."/>
            <person name="Laprevotte I."/>
            <person name="Galibert F."/>
            <person name="Fedele L.A."/>
            <person name="Sherr C.J."/>
        </authorList>
    </citation>
    <scope>NUCLEOTIDE SEQUENCE [GENOMIC RNA]</scope>
</reference>
<sequence>MGQTVTTPLSLTLDHWSEVRARAHNQGVEVRKKKWITLCKAEWVMMNVGWPREGTFSLDNISQVKKKIFAPGPHGHPDQVPYITTWRSLATDPPSWVRPFLPPPKPPTPLPQPLSPQPSAPLTSSLYPVVPKPDPPKPPVLPPDPSSPLIDLLTEEPPPYPGGHGPPPSGPRTPAASPIVSRLRERRENPAEESQALPLREGPNNRPQYWPFSASDLYNWKSHNPPFSQDPVALTNLIESILVTHQPTWDDCQQLLQALLTGEERQRVLLEARKQVPGEDGRPTQLPNVIDETFPLT</sequence>
<comment type="function">
    <molecule>Gag polyprotein</molecule>
    <text evidence="2">Plays a role in budding and is processed by the viral protease during virion maturation outside the cell. During budding, it recruits, in a PPXY-dependent or independent manner, Nedd4-like ubiquitin ligases that conjugate ubiquitin molecules to Gag, or to Gag binding host factors. Interaction with HECT ubiquitin ligases probably link the viral protein to the host ESCRT pathway and facilitate release.</text>
</comment>
<comment type="function">
    <molecule>Matrix protein p15</molecule>
    <text evidence="2">Targets Gag and gag-pol polyproteins to the plasma membrane via a multipartite membrane binding signal, that includes its myristoylated N-terminus. Also mediates nuclear localization of the pre-integration complex.</text>
</comment>
<comment type="function">
    <molecule>RNA-binding phosphoprotein p12</molecule>
    <text evidence="2">Constituent of the pre-integration complex (PIC) which tethers the latter to mitotic chromosomes.</text>
</comment>
<comment type="function">
    <molecule>Capsid protein p30</molecule>
    <text evidence="3">Forms the spherical core of the virion that encapsulates the genomic RNA-nucleocapsid complex.</text>
</comment>
<comment type="subunit">
    <molecule>Gag polyprotein</molecule>
    <text evidence="2">Interacts (via PPXY motif) with host NEDD4 (By similarity). Interacts (via PSAP motif) with host TSG101 (By similarity).</text>
</comment>
<comment type="subunit">
    <molecule>Capsid protein p30</molecule>
    <text evidence="2">Homohexamer. Further associates as homomultimer. The virus core is composed of a lattice formed from hexagonal rings, each containing six capsid monomers.</text>
</comment>
<comment type="subcellular location">
    <molecule>Gag polyprotein</molecule>
    <subcellularLocation>
        <location evidence="1">Virion</location>
    </subcellularLocation>
    <subcellularLocation>
        <location evidence="6">Host cell membrane</location>
        <topology evidence="6">Lipid-anchor</topology>
    </subcellularLocation>
</comment>
<comment type="subcellular location">
    <molecule>Matrix protein p15</molecule>
    <subcellularLocation>
        <location evidence="6">Virion</location>
    </subcellularLocation>
</comment>
<comment type="subcellular location">
    <molecule>Capsid protein p30</molecule>
    <subcellularLocation>
        <location evidence="6">Virion</location>
    </subcellularLocation>
</comment>
<comment type="alternative products">
    <event type="alternative initiation"/>
    <isoform>
        <id>P03338-1</id>
        <name>Gag polyprotein</name>
        <sequence type="displayed"/>
    </isoform>
    <isoform>
        <id>P0DOG9-1</id>
        <name>Glyco-Gag protein</name>
        <sequence type="external"/>
    </isoform>
</comment>
<comment type="domain">
    <molecule>Gag polyprotein</molecule>
    <text evidence="2">Late-budding domains (L domains) are short sequence motifs essential for viral particle budding. They recruit proteins of the host ESCRT machinery (Endosomal Sorting Complex Required for Transport) or ESCRT-associated proteins. RNA-binding phosphoprotein p12 contains one L domain: a PPXY motif which potentially interacts with the WW domain 3 of NEDD4 E3 ubiquitin ligase. Matrix protein p15 contains one L domain: a PTAP/PSAP motif, which potentially interacts with the UEV domain of TSG101.</text>
</comment>
<comment type="PTM">
    <molecule>Gag polyprotein</molecule>
    <text evidence="2">Specific enzymatic cleavages by the viral protease yield mature proteins. The protease is released by autocatalytic cleavage. The polyprotein is cleaved during and after budding, this process is termed maturation.</text>
</comment>
<comment type="miscellaneous">
    <text>This protein is synthesized as a Gag-Fes polyprotein.</text>
</comment>
<comment type="sequence caution" evidence="3">
    <conflict type="erroneous gene model prediction">
        <sequence resource="EMBL-CDS" id="AAA43046"/>
    </conflict>
</comment>
<evidence type="ECO:0000250" key="1"/>
<evidence type="ECO:0000250" key="2">
    <source>
        <dbReference type="UniProtKB" id="P03332"/>
    </source>
</evidence>
<evidence type="ECO:0000250" key="3">
    <source>
        <dbReference type="UniProtKB" id="P03336"/>
    </source>
</evidence>
<evidence type="ECO:0000255" key="4"/>
<evidence type="ECO:0000256" key="5">
    <source>
        <dbReference type="SAM" id="MobiDB-lite"/>
    </source>
</evidence>
<evidence type="ECO:0000305" key="6"/>
<keyword id="KW-0024">Alternative initiation</keyword>
<keyword id="KW-0167">Capsid protein</keyword>
<keyword id="KW-1032">Host cell membrane</keyword>
<keyword id="KW-1043">Host membrane</keyword>
<keyword id="KW-0945">Host-virus interaction</keyword>
<keyword id="KW-0449">Lipoprotein</keyword>
<keyword id="KW-0472">Membrane</keyword>
<keyword id="KW-0519">Myristate</keyword>
<keyword id="KW-0694">RNA-binding</keyword>
<keyword id="KW-1198">Viral budding</keyword>
<keyword id="KW-1187">Viral budding via the host ESCRT complexes</keyword>
<keyword id="KW-0468">Viral matrix protein</keyword>
<keyword id="KW-1188">Viral release from host cell</keyword>
<keyword id="KW-0946">Virion</keyword>
<proteinExistence type="inferred from homology"/>
<name>GAG_FSVST</name>